<dbReference type="EMBL" id="AJ585847">
    <property type="protein sequence ID" value="CAE51488.1"/>
    <property type="molecule type" value="Genomic_DNA"/>
</dbReference>
<dbReference type="EMBL" id="AB240139">
    <property type="protein sequence ID" value="BAE47977.1"/>
    <property type="molecule type" value="Genomic_DNA"/>
</dbReference>
<dbReference type="RefSeq" id="YP_398839.1">
    <property type="nucleotide sequence ID" value="NC_007602.1"/>
</dbReference>
<dbReference type="GeneID" id="3776345"/>
<dbReference type="KEGG" id="nto:3776345"/>
<dbReference type="OrthoDB" id="1886907at2759"/>
<dbReference type="GO" id="GO:0009507">
    <property type="term" value="C:chloroplast"/>
    <property type="evidence" value="ECO:0007669"/>
    <property type="project" value="UniProtKB-SubCell"/>
</dbReference>
<dbReference type="GO" id="GO:0003723">
    <property type="term" value="F:RNA binding"/>
    <property type="evidence" value="ECO:0007669"/>
    <property type="project" value="UniProtKB-KW"/>
</dbReference>
<dbReference type="GO" id="GO:0006397">
    <property type="term" value="P:mRNA processing"/>
    <property type="evidence" value="ECO:0007669"/>
    <property type="project" value="UniProtKB-KW"/>
</dbReference>
<dbReference type="GO" id="GO:0008380">
    <property type="term" value="P:RNA splicing"/>
    <property type="evidence" value="ECO:0007669"/>
    <property type="project" value="UniProtKB-UniRule"/>
</dbReference>
<dbReference type="GO" id="GO:0008033">
    <property type="term" value="P:tRNA processing"/>
    <property type="evidence" value="ECO:0007669"/>
    <property type="project" value="UniProtKB-KW"/>
</dbReference>
<dbReference type="HAMAP" id="MF_01390">
    <property type="entry name" value="MatK"/>
    <property type="match status" value="1"/>
</dbReference>
<dbReference type="InterPro" id="IPR024937">
    <property type="entry name" value="Domain_X"/>
</dbReference>
<dbReference type="InterPro" id="IPR002866">
    <property type="entry name" value="Maturase_MatK"/>
</dbReference>
<dbReference type="InterPro" id="IPR024942">
    <property type="entry name" value="Maturase_MatK_N"/>
</dbReference>
<dbReference type="PANTHER" id="PTHR34811">
    <property type="entry name" value="MATURASE K"/>
    <property type="match status" value="1"/>
</dbReference>
<dbReference type="PANTHER" id="PTHR34811:SF1">
    <property type="entry name" value="MATURASE K"/>
    <property type="match status" value="1"/>
</dbReference>
<dbReference type="Pfam" id="PF01348">
    <property type="entry name" value="Intron_maturas2"/>
    <property type="match status" value="1"/>
</dbReference>
<dbReference type="Pfam" id="PF01824">
    <property type="entry name" value="MatK_N"/>
    <property type="match status" value="1"/>
</dbReference>
<keyword id="KW-0150">Chloroplast</keyword>
<keyword id="KW-0507">mRNA processing</keyword>
<keyword id="KW-0934">Plastid</keyword>
<keyword id="KW-0694">RNA-binding</keyword>
<keyword id="KW-0819">tRNA processing</keyword>
<name>MATK_NICTO</name>
<sequence length="509" mass="60158">MEEIQRYLQPDRSQQHNFLYPLIFQEYIYALAHDHGLNRNRSILLENPGYNNKLSFLIVKRLITRMYQQNHFLISTNDSNKNEFLGCNKSLYSQMISEGFAFIVEIPFSLRLISSLSSFEGKKIFKSHNLRSIHSTFPFLEDNFSHLNYVLDILIPYPVHLEILVQTLRYWVKDASSLHLLRFFLHEYWNLNSLITSKKPGYSFSKKKQRFFFFLYNSYVYECESTFVFLRNQSSHLRSTSFGALLERIYFYGKIERLIEVFAKDFQVTLCLFKDPFMHYVRYQGKSILASKGTFLLMNKWKFYLVNFWQCHFSLCFHTGRIHINQLSNHSRDFMGYLSSVRLNSSMVRSQMLENSFLINNAIKKFDTLVPIIPLIGSLAKANFCTVLGHPISKPVWSDLSDSDIIDRFGRICKNLFHYYSGSSKKKTLYRIKYILRLSCARTLARKHKSTVRAFLKRSGSELLEEFLTSEEQVLSLTFPRASSNLWGVYRSRIWYLDIFCINDLANYQ</sequence>
<protein>
    <recommendedName>
        <fullName evidence="1">Maturase K</fullName>
    </recommendedName>
    <alternativeName>
        <fullName evidence="1">Intron maturase</fullName>
    </alternativeName>
</protein>
<gene>
    <name evidence="1" type="primary">matK</name>
</gene>
<organism>
    <name type="scientific">Nicotiana tomentosiformis</name>
    <name type="common">Tobacco</name>
    <dbReference type="NCBI Taxonomy" id="4098"/>
    <lineage>
        <taxon>Eukaryota</taxon>
        <taxon>Viridiplantae</taxon>
        <taxon>Streptophyta</taxon>
        <taxon>Embryophyta</taxon>
        <taxon>Tracheophyta</taxon>
        <taxon>Spermatophyta</taxon>
        <taxon>Magnoliopsida</taxon>
        <taxon>eudicotyledons</taxon>
        <taxon>Gunneridae</taxon>
        <taxon>Pentapetalae</taxon>
        <taxon>asterids</taxon>
        <taxon>lamiids</taxon>
        <taxon>Solanales</taxon>
        <taxon>Solanaceae</taxon>
        <taxon>Nicotianoideae</taxon>
        <taxon>Nicotianeae</taxon>
        <taxon>Nicotiana</taxon>
    </lineage>
</organism>
<feature type="chain" id="PRO_0000143549" description="Maturase K">
    <location>
        <begin position="1"/>
        <end position="509"/>
    </location>
</feature>
<reference key="1">
    <citation type="journal article" date="2004" name="Mol. Phylogenet. Evol.">
        <title>Phylogenetic relationships in Nicotiana (Solanaceae) inferred from multiple plastid regions.</title>
        <authorList>
            <person name="Clarkson J.J."/>
            <person name="Knapp S."/>
            <person name="Garcia V.F."/>
            <person name="Olmstead R.G."/>
            <person name="Leitch A.R."/>
            <person name="Chase M.W."/>
        </authorList>
    </citation>
    <scope>NUCLEOTIDE SEQUENCE [GENOMIC DNA]</scope>
</reference>
<reference key="2">
    <citation type="journal article" date="2006" name="Mol. Genet. Genomics">
        <title>The chloroplast genome of Nicotiana sylvestris and Nicotiana tomentosiformis: complete sequencing confirms that the Nicotiana sylvestris progenitor is the maternal genome donor of Nicotiana tabacum.</title>
        <authorList>
            <person name="Yukawa M."/>
            <person name="Tsudzuki T."/>
            <person name="Sugiura M."/>
        </authorList>
    </citation>
    <scope>NUCLEOTIDE SEQUENCE [LARGE SCALE GENOMIC DNA]</scope>
</reference>
<accession>Q70D40</accession>
<accession>Q33C58</accession>
<evidence type="ECO:0000255" key="1">
    <source>
        <dbReference type="HAMAP-Rule" id="MF_01390"/>
    </source>
</evidence>
<comment type="function">
    <text evidence="1">Usually encoded in the trnK tRNA gene intron. Probably assists in splicing its own and other chloroplast group II introns.</text>
</comment>
<comment type="subcellular location">
    <subcellularLocation>
        <location>Plastid</location>
        <location>Chloroplast</location>
    </subcellularLocation>
</comment>
<comment type="similarity">
    <text evidence="1">Belongs to the intron maturase 2 family. MatK subfamily.</text>
</comment>
<geneLocation type="chloroplast"/>
<proteinExistence type="inferred from homology"/>